<gene>
    <name evidence="1" type="primary">mtfA</name>
    <name type="ordered locus">SbBS512_E0993</name>
</gene>
<keyword id="KW-0031">Aminopeptidase</keyword>
<keyword id="KW-0963">Cytoplasm</keyword>
<keyword id="KW-0378">Hydrolase</keyword>
<keyword id="KW-0479">Metal-binding</keyword>
<keyword id="KW-0482">Metalloprotease</keyword>
<keyword id="KW-0645">Protease</keyword>
<keyword id="KW-1185">Reference proteome</keyword>
<keyword id="KW-0862">Zinc</keyword>
<dbReference type="EC" id="3.4.11.-" evidence="1"/>
<dbReference type="EMBL" id="CP001063">
    <property type="protein sequence ID" value="ACD07580.1"/>
    <property type="molecule type" value="Genomic_DNA"/>
</dbReference>
<dbReference type="RefSeq" id="WP_001302302.1">
    <property type="nucleotide sequence ID" value="NC_010658.1"/>
</dbReference>
<dbReference type="SMR" id="B2TWS7"/>
<dbReference type="STRING" id="344609.SbBS512_E0993"/>
<dbReference type="MEROPS" id="M90.001"/>
<dbReference type="GeneID" id="75205786"/>
<dbReference type="KEGG" id="sbc:SbBS512_E0993"/>
<dbReference type="HOGENOM" id="CLU_063037_2_0_6"/>
<dbReference type="Proteomes" id="UP000001030">
    <property type="component" value="Chromosome"/>
</dbReference>
<dbReference type="GO" id="GO:0005829">
    <property type="term" value="C:cytosol"/>
    <property type="evidence" value="ECO:0007669"/>
    <property type="project" value="TreeGrafter"/>
</dbReference>
<dbReference type="GO" id="GO:0004177">
    <property type="term" value="F:aminopeptidase activity"/>
    <property type="evidence" value="ECO:0007669"/>
    <property type="project" value="UniProtKB-UniRule"/>
</dbReference>
<dbReference type="GO" id="GO:0008237">
    <property type="term" value="F:metallopeptidase activity"/>
    <property type="evidence" value="ECO:0007669"/>
    <property type="project" value="UniProtKB-UniRule"/>
</dbReference>
<dbReference type="GO" id="GO:0008270">
    <property type="term" value="F:zinc ion binding"/>
    <property type="evidence" value="ECO:0007669"/>
    <property type="project" value="UniProtKB-UniRule"/>
</dbReference>
<dbReference type="GO" id="GO:0006508">
    <property type="term" value="P:proteolysis"/>
    <property type="evidence" value="ECO:0007669"/>
    <property type="project" value="UniProtKB-KW"/>
</dbReference>
<dbReference type="CDD" id="cd20169">
    <property type="entry name" value="Peptidase_M90_mtfA"/>
    <property type="match status" value="1"/>
</dbReference>
<dbReference type="FunFam" id="1.10.472.150:FF:000001">
    <property type="entry name" value="Protein MtfA"/>
    <property type="match status" value="1"/>
</dbReference>
<dbReference type="FunFam" id="3.40.390.10:FF:000012">
    <property type="entry name" value="Protein MtfA"/>
    <property type="match status" value="1"/>
</dbReference>
<dbReference type="Gene3D" id="3.40.390.10">
    <property type="entry name" value="Collagenase (Catalytic Domain)"/>
    <property type="match status" value="1"/>
</dbReference>
<dbReference type="Gene3D" id="1.10.472.150">
    <property type="entry name" value="Glucose-regulated metallo-peptidase M90, N-terminal domain"/>
    <property type="match status" value="1"/>
</dbReference>
<dbReference type="HAMAP" id="MF_01593">
    <property type="entry name" value="MtfA"/>
    <property type="match status" value="1"/>
</dbReference>
<dbReference type="InterPro" id="IPR024079">
    <property type="entry name" value="MetalloPept_cat_dom_sf"/>
</dbReference>
<dbReference type="InterPro" id="IPR057256">
    <property type="entry name" value="MtfA_enterob"/>
</dbReference>
<dbReference type="InterPro" id="IPR010384">
    <property type="entry name" value="MtfA_fam"/>
</dbReference>
<dbReference type="InterPro" id="IPR042252">
    <property type="entry name" value="MtfA_N"/>
</dbReference>
<dbReference type="NCBIfam" id="NF011939">
    <property type="entry name" value="PRK15410.1"/>
    <property type="match status" value="1"/>
</dbReference>
<dbReference type="PANTHER" id="PTHR30164">
    <property type="entry name" value="MTFA PEPTIDASE"/>
    <property type="match status" value="1"/>
</dbReference>
<dbReference type="PANTHER" id="PTHR30164:SF2">
    <property type="entry name" value="PROTEIN MTFA"/>
    <property type="match status" value="1"/>
</dbReference>
<dbReference type="Pfam" id="PF06167">
    <property type="entry name" value="Peptidase_M90"/>
    <property type="match status" value="1"/>
</dbReference>
<dbReference type="SUPFAM" id="SSF55486">
    <property type="entry name" value="Metalloproteases ('zincins'), catalytic domain"/>
    <property type="match status" value="1"/>
</dbReference>
<proteinExistence type="inferred from homology"/>
<feature type="chain" id="PRO_1000147849" description="Mlc titration factor A">
    <location>
        <begin position="1"/>
        <end position="265"/>
    </location>
</feature>
<feature type="binding site" evidence="1">
    <location>
        <position position="111"/>
    </location>
    <ligand>
        <name>Zn(2+)</name>
        <dbReference type="ChEBI" id="CHEBI:29105"/>
    </ligand>
</feature>
<feature type="binding site" evidence="1">
    <location>
        <position position="148"/>
    </location>
    <ligand>
        <name>Zn(2+)</name>
        <dbReference type="ChEBI" id="CHEBI:29105"/>
    </ligand>
</feature>
<feature type="binding site" evidence="1">
    <location>
        <position position="152"/>
    </location>
    <ligand>
        <name>Zn(2+)</name>
        <dbReference type="ChEBI" id="CHEBI:29105"/>
    </ligand>
</feature>
<feature type="binding site" evidence="1">
    <location>
        <position position="211"/>
    </location>
    <ligand>
        <name>Zn(2+)</name>
        <dbReference type="ChEBI" id="CHEBI:29105"/>
    </ligand>
</feature>
<protein>
    <recommendedName>
        <fullName evidence="1">Mlc titration factor A</fullName>
    </recommendedName>
    <alternativeName>
        <fullName evidence="1">Probable zinc metallopeptidase MtfA</fullName>
        <ecNumber evidence="1">3.4.11.-</ecNumber>
    </alternativeName>
</protein>
<evidence type="ECO:0000255" key="1">
    <source>
        <dbReference type="HAMAP-Rule" id="MF_01593"/>
    </source>
</evidence>
<sequence length="265" mass="30279">MIKWPWKVQESAHQTALPWQEALSIPLLTCLTEQEQSKLVTLAERFLQQKRLVPLQGFELDSLRSCRIALLFCLPVLELGLEWLDGFHEVLIYPAPFVVDDEWEDDIGLVHNQRIVQSGQSWQQGPIVLNWLDIQDSFDASGFNLIIHEVAHKLDTRNGDRASGVPFIPLREVAGWEHDLHAAMNNIQEEIELVGENAASIDAYAASDPAECFAVLSEYFFSAPELFAPRFPSLWQRFCQFYQQDPLQRLHHANDTDSFSATNVH</sequence>
<accession>B2TWS7</accession>
<organism>
    <name type="scientific">Shigella boydii serotype 18 (strain CDC 3083-94 / BS512)</name>
    <dbReference type="NCBI Taxonomy" id="344609"/>
    <lineage>
        <taxon>Bacteria</taxon>
        <taxon>Pseudomonadati</taxon>
        <taxon>Pseudomonadota</taxon>
        <taxon>Gammaproteobacteria</taxon>
        <taxon>Enterobacterales</taxon>
        <taxon>Enterobacteriaceae</taxon>
        <taxon>Shigella</taxon>
    </lineage>
</organism>
<reference key="1">
    <citation type="submission" date="2008-05" db="EMBL/GenBank/DDBJ databases">
        <title>Complete sequence of Shigella boydii serotype 18 strain BS512.</title>
        <authorList>
            <person name="Rasko D.A."/>
            <person name="Rosovitz M."/>
            <person name="Maurelli A.T."/>
            <person name="Myers G."/>
            <person name="Seshadri R."/>
            <person name="Cer R."/>
            <person name="Jiang L."/>
            <person name="Ravel J."/>
            <person name="Sebastian Y."/>
        </authorList>
    </citation>
    <scope>NUCLEOTIDE SEQUENCE [LARGE SCALE GENOMIC DNA]</scope>
    <source>
        <strain>CDC 3083-94 / BS512</strain>
    </source>
</reference>
<name>MTFA_SHIB3</name>
<comment type="function">
    <text evidence="1">Involved in the modulation of the activity of the glucose-phosphotransferase system (glucose-PTS). Interacts with the transcriptional repressor Mlc, preventing its interaction with DNA and leading to the modulation of expression of genes regulated by Mlc, including ptsG, which encodes the PTS system glucose-specific EIICB component.</text>
</comment>
<comment type="function">
    <text evidence="1">Shows zinc-dependent metallopeptidase activity.</text>
</comment>
<comment type="cofactor">
    <cofactor evidence="1">
        <name>Zn(2+)</name>
        <dbReference type="ChEBI" id="CHEBI:29105"/>
    </cofactor>
    <text evidence="1">Binds 1 zinc ion per subunit.</text>
</comment>
<comment type="subunit">
    <text evidence="1">Interacts with Mlc.</text>
</comment>
<comment type="subcellular location">
    <subcellularLocation>
        <location evidence="1">Cytoplasm</location>
    </subcellularLocation>
</comment>
<comment type="similarity">
    <text evidence="1">Belongs to the MtfA family.</text>
</comment>